<feature type="signal peptide" evidence="1">
    <location>
        <begin position="1"/>
        <end position="21"/>
    </location>
</feature>
<feature type="chain" id="PRO_1000005696" description="Outer-membrane lipoprotein carrier protein">
    <location>
        <begin position="22"/>
        <end position="203"/>
    </location>
</feature>
<dbReference type="EMBL" id="CP000647">
    <property type="protein sequence ID" value="ABR76359.1"/>
    <property type="molecule type" value="Genomic_DNA"/>
</dbReference>
<dbReference type="RefSeq" id="WP_002898132.1">
    <property type="nucleotide sequence ID" value="NC_009648.1"/>
</dbReference>
<dbReference type="SMR" id="A6T6Y8"/>
<dbReference type="STRING" id="272620.KPN_00923"/>
<dbReference type="jPOST" id="A6T6Y8"/>
<dbReference type="PaxDb" id="272620-KPN_00923"/>
<dbReference type="EnsemblBacteria" id="ABR76359">
    <property type="protein sequence ID" value="ABR76359"/>
    <property type="gene ID" value="KPN_00923"/>
</dbReference>
<dbReference type="KEGG" id="kpn:KPN_00923"/>
<dbReference type="HOGENOM" id="CLU_087560_1_1_6"/>
<dbReference type="Proteomes" id="UP000000265">
    <property type="component" value="Chromosome"/>
</dbReference>
<dbReference type="GO" id="GO:0030288">
    <property type="term" value="C:outer membrane-bounded periplasmic space"/>
    <property type="evidence" value="ECO:0007669"/>
    <property type="project" value="TreeGrafter"/>
</dbReference>
<dbReference type="GO" id="GO:0044874">
    <property type="term" value="P:lipoprotein localization to outer membrane"/>
    <property type="evidence" value="ECO:0007669"/>
    <property type="project" value="UniProtKB-UniRule"/>
</dbReference>
<dbReference type="GO" id="GO:0042953">
    <property type="term" value="P:lipoprotein transport"/>
    <property type="evidence" value="ECO:0007669"/>
    <property type="project" value="InterPro"/>
</dbReference>
<dbReference type="CDD" id="cd16325">
    <property type="entry name" value="LolA"/>
    <property type="match status" value="1"/>
</dbReference>
<dbReference type="FunFam" id="2.50.20.10:FF:000001">
    <property type="entry name" value="Outer-membrane lipoprotein carrier protein"/>
    <property type="match status" value="1"/>
</dbReference>
<dbReference type="Gene3D" id="2.50.20.10">
    <property type="entry name" value="Lipoprotein localisation LolA/LolB/LppX"/>
    <property type="match status" value="1"/>
</dbReference>
<dbReference type="HAMAP" id="MF_00240">
    <property type="entry name" value="LolA"/>
    <property type="match status" value="1"/>
</dbReference>
<dbReference type="InterPro" id="IPR029046">
    <property type="entry name" value="LolA/LolB/LppX"/>
</dbReference>
<dbReference type="InterPro" id="IPR004564">
    <property type="entry name" value="OM_lipoprot_carrier_LolA-like"/>
</dbReference>
<dbReference type="InterPro" id="IPR018323">
    <property type="entry name" value="OM_lipoprot_carrier_LolA_Pbac"/>
</dbReference>
<dbReference type="NCBIfam" id="TIGR00547">
    <property type="entry name" value="lolA"/>
    <property type="match status" value="1"/>
</dbReference>
<dbReference type="PANTHER" id="PTHR35869">
    <property type="entry name" value="OUTER-MEMBRANE LIPOPROTEIN CARRIER PROTEIN"/>
    <property type="match status" value="1"/>
</dbReference>
<dbReference type="PANTHER" id="PTHR35869:SF1">
    <property type="entry name" value="OUTER-MEMBRANE LIPOPROTEIN CARRIER PROTEIN"/>
    <property type="match status" value="1"/>
</dbReference>
<dbReference type="Pfam" id="PF03548">
    <property type="entry name" value="LolA"/>
    <property type="match status" value="1"/>
</dbReference>
<dbReference type="SUPFAM" id="SSF89392">
    <property type="entry name" value="Prokaryotic lipoproteins and lipoprotein localization factors"/>
    <property type="match status" value="1"/>
</dbReference>
<accession>A6T6Y8</accession>
<name>LOLA_KLEP7</name>
<reference key="1">
    <citation type="submission" date="2006-09" db="EMBL/GenBank/DDBJ databases">
        <authorList>
            <consortium name="The Klebsiella pneumonia Genome Sequencing Project"/>
            <person name="McClelland M."/>
            <person name="Sanderson E.K."/>
            <person name="Spieth J."/>
            <person name="Clifton W.S."/>
            <person name="Latreille P."/>
            <person name="Sabo A."/>
            <person name="Pepin K."/>
            <person name="Bhonagiri V."/>
            <person name="Porwollik S."/>
            <person name="Ali J."/>
            <person name="Wilson R.K."/>
        </authorList>
    </citation>
    <scope>NUCLEOTIDE SEQUENCE [LARGE SCALE GENOMIC DNA]</scope>
    <source>
        <strain>ATCC 700721 / MGH 78578</strain>
    </source>
</reference>
<keyword id="KW-0143">Chaperone</keyword>
<keyword id="KW-0574">Periplasm</keyword>
<keyword id="KW-0653">Protein transport</keyword>
<keyword id="KW-0732">Signal</keyword>
<keyword id="KW-0813">Transport</keyword>
<organism>
    <name type="scientific">Klebsiella pneumoniae subsp. pneumoniae (strain ATCC 700721 / MGH 78578)</name>
    <dbReference type="NCBI Taxonomy" id="272620"/>
    <lineage>
        <taxon>Bacteria</taxon>
        <taxon>Pseudomonadati</taxon>
        <taxon>Pseudomonadota</taxon>
        <taxon>Gammaproteobacteria</taxon>
        <taxon>Enterobacterales</taxon>
        <taxon>Enterobacteriaceae</taxon>
        <taxon>Klebsiella/Raoultella group</taxon>
        <taxon>Klebsiella</taxon>
        <taxon>Klebsiella pneumoniae complex</taxon>
    </lineage>
</organism>
<gene>
    <name evidence="1" type="primary">lolA</name>
    <name type="ordered locus">KPN78578_08980</name>
    <name type="ORF">KPN_00923</name>
</gene>
<comment type="function">
    <text evidence="1">Participates in the translocation of lipoproteins from the inner membrane to the outer membrane. Only forms a complex with a lipoprotein if the residue after the N-terminal Cys is not an aspartate (The Asp acts as a targeting signal to indicate that the lipoprotein should stay in the inner membrane).</text>
</comment>
<comment type="subunit">
    <text evidence="1">Monomer.</text>
</comment>
<comment type="subcellular location">
    <subcellularLocation>
        <location evidence="1">Periplasm</location>
    </subcellularLocation>
</comment>
<comment type="similarity">
    <text evidence="1">Belongs to the LolA family.</text>
</comment>
<protein>
    <recommendedName>
        <fullName evidence="1">Outer-membrane lipoprotein carrier protein</fullName>
    </recommendedName>
</protein>
<proteinExistence type="inferred from homology"/>
<evidence type="ECO:0000255" key="1">
    <source>
        <dbReference type="HAMAP-Rule" id="MF_00240"/>
    </source>
</evidence>
<sequence length="203" mass="22558">MKKLAITCALLSGMVVSQVWADAASDLKSRLDKVSSFHASFTQKVTDGSGNAVQDGQGDLWVKRPNLFNWHMTQPDESVLVSDGKTLWFYNPFVEQATATWLKDATSNTPFMLIARNQSSDWQQYNIKQNGDDFVLTPKSGSGNLKQFTINVGRDGTIHQFSAVEQDDQRSSYQLKSQQNGAVDAAKFTFTPPKGVTVDDQRK</sequence>